<keyword id="KW-0067">ATP-binding</keyword>
<keyword id="KW-0238">DNA-binding</keyword>
<keyword id="KW-0255">Endonuclease</keyword>
<keyword id="KW-0378">Hydrolase</keyword>
<keyword id="KW-0540">Nuclease</keyword>
<keyword id="KW-0547">Nucleotide-binding</keyword>
<keyword id="KW-1185">Reference proteome</keyword>
<keyword id="KW-0694">RNA-binding</keyword>
<keyword id="KW-0699">rRNA-binding</keyword>
<reference key="1">
    <citation type="journal article" date="1998" name="Nature">
        <title>The complete genome of the hyperthermophilic bacterium Aquifex aeolicus.</title>
        <authorList>
            <person name="Deckert G."/>
            <person name="Warren P.V."/>
            <person name="Gaasterland T."/>
            <person name="Young W.G."/>
            <person name="Lenox A.L."/>
            <person name="Graham D.E."/>
            <person name="Overbeek R."/>
            <person name="Snead M.A."/>
            <person name="Keller M."/>
            <person name="Aujay M."/>
            <person name="Huber R."/>
            <person name="Feldman R.A."/>
            <person name="Short J.M."/>
            <person name="Olsen G.J."/>
            <person name="Swanson R.V."/>
        </authorList>
    </citation>
    <scope>NUCLEOTIDE SEQUENCE [LARGE SCALE GENOMIC DNA]</scope>
    <source>
        <strain>VF5</strain>
    </source>
</reference>
<organism>
    <name type="scientific">Aquifex aeolicus (strain VF5)</name>
    <dbReference type="NCBI Taxonomy" id="224324"/>
    <lineage>
        <taxon>Bacteria</taxon>
        <taxon>Pseudomonadati</taxon>
        <taxon>Aquificota</taxon>
        <taxon>Aquificia</taxon>
        <taxon>Aquificales</taxon>
        <taxon>Aquificaceae</taxon>
        <taxon>Aquifex</taxon>
    </lineage>
</organism>
<proteinExistence type="inferred from homology"/>
<protein>
    <recommendedName>
        <fullName evidence="1">Endonuclease MutS2</fullName>
        <ecNumber evidence="1">3.1.-.-</ecNumber>
    </recommendedName>
    <alternativeName>
        <fullName evidence="1">Ribosome-associated protein quality control-upstream factor</fullName>
        <shortName evidence="1">RQC-upstream factor</shortName>
        <shortName evidence="1">RqcU</shortName>
        <ecNumber evidence="1">3.6.4.-</ecNumber>
    </alternativeName>
</protein>
<dbReference type="EC" id="3.1.-.-" evidence="1"/>
<dbReference type="EC" id="3.6.4.-" evidence="1"/>
<dbReference type="EMBL" id="AE000657">
    <property type="protein sequence ID" value="AAC07247.1"/>
    <property type="molecule type" value="Genomic_DNA"/>
</dbReference>
<dbReference type="PIR" id="D70407">
    <property type="entry name" value="D70407"/>
</dbReference>
<dbReference type="RefSeq" id="NP_213851.1">
    <property type="nucleotide sequence ID" value="NC_000918.1"/>
</dbReference>
<dbReference type="RefSeq" id="WP_010880789.1">
    <property type="nucleotide sequence ID" value="NC_000918.1"/>
</dbReference>
<dbReference type="SMR" id="O67287"/>
<dbReference type="STRING" id="224324.aq_1242"/>
<dbReference type="EnsemblBacteria" id="AAC07247">
    <property type="protein sequence ID" value="AAC07247"/>
    <property type="gene ID" value="aq_1242"/>
</dbReference>
<dbReference type="KEGG" id="aae:aq_1242"/>
<dbReference type="PATRIC" id="fig|224324.8.peg.968"/>
<dbReference type="eggNOG" id="COG1193">
    <property type="taxonomic scope" value="Bacteria"/>
</dbReference>
<dbReference type="HOGENOM" id="CLU_011252_2_1_0"/>
<dbReference type="InParanoid" id="O67287"/>
<dbReference type="OrthoDB" id="9808166at2"/>
<dbReference type="Proteomes" id="UP000000798">
    <property type="component" value="Chromosome"/>
</dbReference>
<dbReference type="GO" id="GO:0005524">
    <property type="term" value="F:ATP binding"/>
    <property type="evidence" value="ECO:0007669"/>
    <property type="project" value="UniProtKB-UniRule"/>
</dbReference>
<dbReference type="GO" id="GO:0016887">
    <property type="term" value="F:ATP hydrolysis activity"/>
    <property type="evidence" value="ECO:0007669"/>
    <property type="project" value="InterPro"/>
</dbReference>
<dbReference type="GO" id="GO:0140664">
    <property type="term" value="F:ATP-dependent DNA damage sensor activity"/>
    <property type="evidence" value="ECO:0007669"/>
    <property type="project" value="InterPro"/>
</dbReference>
<dbReference type="GO" id="GO:0003690">
    <property type="term" value="F:double-stranded DNA binding"/>
    <property type="evidence" value="ECO:0000318"/>
    <property type="project" value="GO_Central"/>
</dbReference>
<dbReference type="GO" id="GO:0004519">
    <property type="term" value="F:endonuclease activity"/>
    <property type="evidence" value="ECO:0007669"/>
    <property type="project" value="UniProtKB-UniRule"/>
</dbReference>
<dbReference type="GO" id="GO:0030983">
    <property type="term" value="F:mismatched DNA binding"/>
    <property type="evidence" value="ECO:0007669"/>
    <property type="project" value="InterPro"/>
</dbReference>
<dbReference type="GO" id="GO:0043023">
    <property type="term" value="F:ribosomal large subunit binding"/>
    <property type="evidence" value="ECO:0007669"/>
    <property type="project" value="UniProtKB-UniRule"/>
</dbReference>
<dbReference type="GO" id="GO:0019843">
    <property type="term" value="F:rRNA binding"/>
    <property type="evidence" value="ECO:0007669"/>
    <property type="project" value="UniProtKB-UniRule"/>
</dbReference>
<dbReference type="GO" id="GO:0006298">
    <property type="term" value="P:mismatch repair"/>
    <property type="evidence" value="ECO:0007669"/>
    <property type="project" value="InterPro"/>
</dbReference>
<dbReference type="GO" id="GO:0045910">
    <property type="term" value="P:negative regulation of DNA recombination"/>
    <property type="evidence" value="ECO:0007669"/>
    <property type="project" value="InterPro"/>
</dbReference>
<dbReference type="GO" id="GO:0072344">
    <property type="term" value="P:rescue of stalled ribosome"/>
    <property type="evidence" value="ECO:0007669"/>
    <property type="project" value="UniProtKB-UniRule"/>
</dbReference>
<dbReference type="CDD" id="cd03280">
    <property type="entry name" value="ABC_MutS2"/>
    <property type="match status" value="1"/>
</dbReference>
<dbReference type="FunFam" id="3.30.1370.110:FF:000004">
    <property type="entry name" value="Endonuclease MutS2"/>
    <property type="match status" value="1"/>
</dbReference>
<dbReference type="FunFam" id="3.40.50.300:FF:001531">
    <property type="entry name" value="Endonuclease MutS2"/>
    <property type="match status" value="1"/>
</dbReference>
<dbReference type="Gene3D" id="3.30.1370.110">
    <property type="match status" value="1"/>
</dbReference>
<dbReference type="Gene3D" id="3.40.50.300">
    <property type="entry name" value="P-loop containing nucleotide triphosphate hydrolases"/>
    <property type="match status" value="1"/>
</dbReference>
<dbReference type="HAMAP" id="MF_00092">
    <property type="entry name" value="MutS2"/>
    <property type="match status" value="1"/>
</dbReference>
<dbReference type="InterPro" id="IPR000432">
    <property type="entry name" value="DNA_mismatch_repair_MutS_C"/>
</dbReference>
<dbReference type="InterPro" id="IPR007696">
    <property type="entry name" value="DNA_mismatch_repair_MutS_core"/>
</dbReference>
<dbReference type="InterPro" id="IPR036187">
    <property type="entry name" value="DNA_mismatch_repair_MutS_sf"/>
</dbReference>
<dbReference type="InterPro" id="IPR045076">
    <property type="entry name" value="MutS"/>
</dbReference>
<dbReference type="InterPro" id="IPR005747">
    <property type="entry name" value="MutS2"/>
</dbReference>
<dbReference type="InterPro" id="IPR027417">
    <property type="entry name" value="P-loop_NTPase"/>
</dbReference>
<dbReference type="InterPro" id="IPR002625">
    <property type="entry name" value="Smr_dom"/>
</dbReference>
<dbReference type="InterPro" id="IPR036063">
    <property type="entry name" value="Smr_dom_sf"/>
</dbReference>
<dbReference type="NCBIfam" id="TIGR01069">
    <property type="entry name" value="mutS2"/>
    <property type="match status" value="1"/>
</dbReference>
<dbReference type="PANTHER" id="PTHR48466:SF2">
    <property type="entry name" value="OS10G0509000 PROTEIN"/>
    <property type="match status" value="1"/>
</dbReference>
<dbReference type="PANTHER" id="PTHR48466">
    <property type="entry name" value="OS10G0509000 PROTEIN-RELATED"/>
    <property type="match status" value="1"/>
</dbReference>
<dbReference type="Pfam" id="PF00488">
    <property type="entry name" value="MutS_V"/>
    <property type="match status" value="1"/>
</dbReference>
<dbReference type="Pfam" id="PF01713">
    <property type="entry name" value="Smr"/>
    <property type="match status" value="1"/>
</dbReference>
<dbReference type="PIRSF" id="PIRSF005814">
    <property type="entry name" value="MutS_YshD"/>
    <property type="match status" value="1"/>
</dbReference>
<dbReference type="SMART" id="SM00534">
    <property type="entry name" value="MUTSac"/>
    <property type="match status" value="1"/>
</dbReference>
<dbReference type="SMART" id="SM00533">
    <property type="entry name" value="MUTSd"/>
    <property type="match status" value="1"/>
</dbReference>
<dbReference type="SMART" id="SM00463">
    <property type="entry name" value="SMR"/>
    <property type="match status" value="1"/>
</dbReference>
<dbReference type="SUPFAM" id="SSF48334">
    <property type="entry name" value="DNA repair protein MutS, domain III"/>
    <property type="match status" value="1"/>
</dbReference>
<dbReference type="SUPFAM" id="SSF52540">
    <property type="entry name" value="P-loop containing nucleoside triphosphate hydrolases"/>
    <property type="match status" value="1"/>
</dbReference>
<dbReference type="SUPFAM" id="SSF160443">
    <property type="entry name" value="SMR domain-like"/>
    <property type="match status" value="1"/>
</dbReference>
<dbReference type="PROSITE" id="PS00486">
    <property type="entry name" value="DNA_MISMATCH_REPAIR_2"/>
    <property type="match status" value="1"/>
</dbReference>
<dbReference type="PROSITE" id="PS50828">
    <property type="entry name" value="SMR"/>
    <property type="match status" value="1"/>
</dbReference>
<feature type="chain" id="PRO_0000115215" description="Endonuclease MutS2">
    <location>
        <begin position="1"/>
        <end position="762"/>
    </location>
</feature>
<feature type="domain" description="Smr" evidence="1">
    <location>
        <begin position="682"/>
        <end position="757"/>
    </location>
</feature>
<feature type="binding site" evidence="1">
    <location>
        <begin position="329"/>
        <end position="336"/>
    </location>
    <ligand>
        <name>ATP</name>
        <dbReference type="ChEBI" id="CHEBI:30616"/>
    </ligand>
</feature>
<gene>
    <name evidence="1" type="primary">mutS2</name>
    <name type="synonym">mutSB</name>
    <name evidence="1" type="synonym">rqcU</name>
    <name type="ordered locus">aq_1242</name>
</gene>
<name>MUTS2_AQUAE</name>
<accession>O67287</accession>
<comment type="function">
    <text evidence="1">Endonuclease that is involved in the suppression of homologous recombination and thus may have a key role in the control of bacterial genetic diversity.</text>
</comment>
<comment type="function">
    <text evidence="1">Acts as a ribosome collision sensor, splitting the ribosome into its 2 subunits. Detects stalled/collided 70S ribosomes which it binds and splits by an ATP-hydrolysis driven conformational change. Acts upstream of the ribosome quality control system (RQC), a ribosome-associated complex that mediates the extraction of incompletely synthesized nascent chains from stalled ribosomes and their subsequent degradation. Probably generates substrates for RQC.</text>
</comment>
<comment type="subunit">
    <text evidence="1">Homodimer. Binds to stalled ribosomes, contacting rRNA.</text>
</comment>
<comment type="similarity">
    <text evidence="1">Belongs to the DNA mismatch repair MutS family. MutS2 subfamily.</text>
</comment>
<evidence type="ECO:0000255" key="1">
    <source>
        <dbReference type="HAMAP-Rule" id="MF_00092"/>
    </source>
</evidence>
<sequence>MREKDLIKLEFDKVKEVLASYAHSPATKEKIQNLKPYTNKEKVKEEIELSKAFFDIAENVRLFEFEDIRELLKKAKLQGAILGVEDILKILNVINLTKEIRRVLSSHVQRLEPLRKVYKKLYTFSPLENLIIGSIDPRGFVKDEASEELLRVRKSIRAVEEEIKKRLDNLINRPDSAKFLSDRIVTIRNGRYVIPVKTSHVKKIFGIVHGTSSSGYTTYVEPQFVIHLNNKLTELKQKEEEEVRKVLQRITEYIGDYAKELLESFEACVEVDFQQCKYRFSKLVEGSFPDFGEWVELYEARHPVLVLVKEDVVPVGILLKEKKGLILTGPNTGGKTVALKTLGLSVLMFQSAIPVPASPNSKLPLFEKVFTDIGDEQSIEQNLSTFSAHVKNMAEFLPKSDENTLVLIDELGAGTDPIEGSALGIGILEYLKKKKAWVFVTTHHTPIKLYSTNSDYYTPASVLFDRETLKPLYKIAYNTVGESMAFYIAQKYGIPSEVIEIAKRHVGEFGEQYIKAMEKLSDYVKKYEEEFRKLEELRKELQKEKEEVEKLRKEYEEAKRKGWKEAYKEAREYLRKLVQESEEIFKKAKEKKEIKEFVSKKREEIENLAPQKPQKLEVGDLVEFMGKKGKVLEVKGNKALVLVDHLRMWLDTRELQKVGKAEPQKETKVTVQTPVMEKRDTLNLIGKDVETAVRELEKFIEEAYSAGYKVVKVIHGIGSGKLKSAVREALSKNEKVKFFRDAYPKEGGSGVTVVYLEYGEET</sequence>